<organism>
    <name type="scientific">Brucella anthropi (strain ATCC 49188 / DSM 6882 / CCUG 24695 / JCM 21032 / LMG 3331 / NBRC 15819 / NCTC 12168 / Alc 37)</name>
    <name type="common">Ochrobactrum anthropi</name>
    <dbReference type="NCBI Taxonomy" id="439375"/>
    <lineage>
        <taxon>Bacteria</taxon>
        <taxon>Pseudomonadati</taxon>
        <taxon>Pseudomonadota</taxon>
        <taxon>Alphaproteobacteria</taxon>
        <taxon>Hyphomicrobiales</taxon>
        <taxon>Brucellaceae</taxon>
        <taxon>Brucella/Ochrobactrum group</taxon>
        <taxon>Brucella</taxon>
    </lineage>
</organism>
<feature type="chain" id="PRO_1000067355" description="Anhydro-N-acetylmuramic acid kinase">
    <location>
        <begin position="1"/>
        <end position="371"/>
    </location>
</feature>
<feature type="binding site" evidence="1">
    <location>
        <begin position="12"/>
        <end position="20"/>
    </location>
    <ligand>
        <name>ATP</name>
        <dbReference type="ChEBI" id="CHEBI:30616"/>
    </ligand>
</feature>
<reference key="1">
    <citation type="journal article" date="2011" name="J. Bacteriol.">
        <title>Genome of Ochrobactrum anthropi ATCC 49188 T, a versatile opportunistic pathogen and symbiont of several eukaryotic hosts.</title>
        <authorList>
            <person name="Chain P.S."/>
            <person name="Lang D.M."/>
            <person name="Comerci D.J."/>
            <person name="Malfatti S.A."/>
            <person name="Vergez L.M."/>
            <person name="Shin M."/>
            <person name="Ugalde R.A."/>
            <person name="Garcia E."/>
            <person name="Tolmasky M.E."/>
        </authorList>
    </citation>
    <scope>NUCLEOTIDE SEQUENCE [LARGE SCALE GENOMIC DNA]</scope>
    <source>
        <strain>ATCC 49188 / DSM 6882 / CCUG 24695 / JCM 21032 / LMG 3331 / NBRC 15819 / NCTC 12168 / Alc 37</strain>
    </source>
</reference>
<keyword id="KW-0067">ATP-binding</keyword>
<keyword id="KW-0119">Carbohydrate metabolism</keyword>
<keyword id="KW-0418">Kinase</keyword>
<keyword id="KW-0547">Nucleotide-binding</keyword>
<keyword id="KW-1185">Reference proteome</keyword>
<keyword id="KW-0808">Transferase</keyword>
<evidence type="ECO:0000255" key="1">
    <source>
        <dbReference type="HAMAP-Rule" id="MF_01270"/>
    </source>
</evidence>
<protein>
    <recommendedName>
        <fullName evidence="1">Anhydro-N-acetylmuramic acid kinase</fullName>
        <ecNumber evidence="1">2.7.1.170</ecNumber>
    </recommendedName>
    <alternativeName>
        <fullName evidence="1">AnhMurNAc kinase</fullName>
    </alternativeName>
</protein>
<gene>
    <name evidence="1" type="primary">anmK</name>
    <name type="ordered locus">Oant_3131</name>
</gene>
<name>ANMK_BRUA4</name>
<dbReference type="EC" id="2.7.1.170" evidence="1"/>
<dbReference type="EMBL" id="CP000759">
    <property type="protein sequence ID" value="ABS15839.1"/>
    <property type="molecule type" value="Genomic_DNA"/>
</dbReference>
<dbReference type="RefSeq" id="WP_012092574.1">
    <property type="nucleotide sequence ID" value="NC_009668.1"/>
</dbReference>
<dbReference type="SMR" id="A6X3N5"/>
<dbReference type="STRING" id="439375.Oant_3131"/>
<dbReference type="KEGG" id="oan:Oant_3131"/>
<dbReference type="PATRIC" id="fig|439375.7.peg.3281"/>
<dbReference type="eggNOG" id="COG2377">
    <property type="taxonomic scope" value="Bacteria"/>
</dbReference>
<dbReference type="HOGENOM" id="CLU_038782_3_0_5"/>
<dbReference type="PhylomeDB" id="A6X3N5"/>
<dbReference type="UniPathway" id="UPA00343"/>
<dbReference type="UniPathway" id="UPA00544"/>
<dbReference type="Proteomes" id="UP000002301">
    <property type="component" value="Chromosome 2"/>
</dbReference>
<dbReference type="GO" id="GO:0005524">
    <property type="term" value="F:ATP binding"/>
    <property type="evidence" value="ECO:0007669"/>
    <property type="project" value="UniProtKB-UniRule"/>
</dbReference>
<dbReference type="GO" id="GO:0016301">
    <property type="term" value="F:kinase activity"/>
    <property type="evidence" value="ECO:0007669"/>
    <property type="project" value="UniProtKB-KW"/>
</dbReference>
<dbReference type="GO" id="GO:0016773">
    <property type="term" value="F:phosphotransferase activity, alcohol group as acceptor"/>
    <property type="evidence" value="ECO:0007669"/>
    <property type="project" value="UniProtKB-UniRule"/>
</dbReference>
<dbReference type="GO" id="GO:0097175">
    <property type="term" value="P:1,6-anhydro-N-acetyl-beta-muramic acid catabolic process"/>
    <property type="evidence" value="ECO:0007669"/>
    <property type="project" value="UniProtKB-UniRule"/>
</dbReference>
<dbReference type="GO" id="GO:0006040">
    <property type="term" value="P:amino sugar metabolic process"/>
    <property type="evidence" value="ECO:0007669"/>
    <property type="project" value="InterPro"/>
</dbReference>
<dbReference type="GO" id="GO:0009254">
    <property type="term" value="P:peptidoglycan turnover"/>
    <property type="evidence" value="ECO:0007669"/>
    <property type="project" value="UniProtKB-UniRule"/>
</dbReference>
<dbReference type="Gene3D" id="3.30.420.40">
    <property type="match status" value="2"/>
</dbReference>
<dbReference type="HAMAP" id="MF_01270">
    <property type="entry name" value="AnhMurNAc_kinase"/>
    <property type="match status" value="1"/>
</dbReference>
<dbReference type="InterPro" id="IPR005338">
    <property type="entry name" value="Anhydro_N_Ac-Mur_kinase"/>
</dbReference>
<dbReference type="InterPro" id="IPR043129">
    <property type="entry name" value="ATPase_NBD"/>
</dbReference>
<dbReference type="NCBIfam" id="NF007141">
    <property type="entry name" value="PRK09585.1-5"/>
    <property type="match status" value="1"/>
</dbReference>
<dbReference type="PANTHER" id="PTHR30605">
    <property type="entry name" value="ANHYDRO-N-ACETYLMURAMIC ACID KINASE"/>
    <property type="match status" value="1"/>
</dbReference>
<dbReference type="PANTHER" id="PTHR30605:SF0">
    <property type="entry name" value="ANHYDRO-N-ACETYLMURAMIC ACID KINASE"/>
    <property type="match status" value="1"/>
</dbReference>
<dbReference type="Pfam" id="PF03702">
    <property type="entry name" value="AnmK"/>
    <property type="match status" value="1"/>
</dbReference>
<dbReference type="SUPFAM" id="SSF53067">
    <property type="entry name" value="Actin-like ATPase domain"/>
    <property type="match status" value="1"/>
</dbReference>
<accession>A6X3N5</accession>
<sequence length="371" mass="39683">MQPIWAVGLMTGTVLDGNIDVALLKTDGETIAEFGAYALKPYPRWIRDLLEQAQAEARVWNFEGAEPAIFAEAEEALTRAQSAAVRELVEESGLSMADIGVVGFHGQTVLHRAPQAGRLGDTRQLGDGRLMSQLLATKVAYDFRTADIRAGGQGAPLAAVYHAALLRSADASGNTAILNLGGVGNITWWDGDDALVAFDTGPANAPINDFMKKRGLGEMDRDGALAAKGKVDEDRLAELLKHPYLIAPYPKSLDRFDFTEMMADGLNEENGAATLTAFTTSAVGKALDILPRRPKRLAVSGGGRRNPTMMHMLVERAEVELVPVEALGWRGDAVEAECFAFLAVRVLRGLPISFPSTTGVPEPMTGGELVG</sequence>
<comment type="function">
    <text evidence="1">Catalyzes the specific phosphorylation of 1,6-anhydro-N-acetylmuramic acid (anhMurNAc) with the simultaneous cleavage of the 1,6-anhydro ring, generating MurNAc-6-P. Is required for the utilization of anhMurNAc either imported from the medium or derived from its own cell wall murein, and thus plays a role in cell wall recycling.</text>
</comment>
<comment type="catalytic activity">
    <reaction evidence="1">
        <text>1,6-anhydro-N-acetyl-beta-muramate + ATP + H2O = N-acetyl-D-muramate 6-phosphate + ADP + H(+)</text>
        <dbReference type="Rhea" id="RHEA:24952"/>
        <dbReference type="ChEBI" id="CHEBI:15377"/>
        <dbReference type="ChEBI" id="CHEBI:15378"/>
        <dbReference type="ChEBI" id="CHEBI:30616"/>
        <dbReference type="ChEBI" id="CHEBI:58690"/>
        <dbReference type="ChEBI" id="CHEBI:58722"/>
        <dbReference type="ChEBI" id="CHEBI:456216"/>
        <dbReference type="EC" id="2.7.1.170"/>
    </reaction>
</comment>
<comment type="pathway">
    <text evidence="1">Amino-sugar metabolism; 1,6-anhydro-N-acetylmuramate degradation.</text>
</comment>
<comment type="pathway">
    <text evidence="1">Cell wall biogenesis; peptidoglycan recycling.</text>
</comment>
<comment type="similarity">
    <text evidence="1">Belongs to the anhydro-N-acetylmuramic acid kinase family.</text>
</comment>
<proteinExistence type="inferred from homology"/>